<keyword id="KW-0963">Cytoplasm</keyword>
<keyword id="KW-0350">Heme biosynthesis</keyword>
<keyword id="KW-0408">Iron</keyword>
<keyword id="KW-0456">Lyase</keyword>
<keyword id="KW-0479">Metal-binding</keyword>
<keyword id="KW-0627">Porphyrin biosynthesis</keyword>
<keyword id="KW-1185">Reference proteome</keyword>
<feature type="chain" id="PRO_0000175172" description="Coproporphyrin III ferrochelatase">
    <location>
        <begin position="1"/>
        <end position="352"/>
    </location>
</feature>
<feature type="binding site" evidence="1">
    <location>
        <position position="52"/>
    </location>
    <ligand>
        <name>Fe-coproporphyrin III</name>
        <dbReference type="ChEBI" id="CHEBI:68438"/>
    </ligand>
</feature>
<feature type="binding site" evidence="1">
    <location>
        <position position="121"/>
    </location>
    <ligand>
        <name>Fe-coproporphyrin III</name>
        <dbReference type="ChEBI" id="CHEBI:68438"/>
    </ligand>
</feature>
<feature type="binding site" evidence="1">
    <location>
        <position position="181"/>
    </location>
    <ligand>
        <name>Fe(2+)</name>
        <dbReference type="ChEBI" id="CHEBI:29033"/>
    </ligand>
</feature>
<feature type="binding site" evidence="1">
    <location>
        <position position="269"/>
    </location>
    <ligand>
        <name>Fe(2+)</name>
        <dbReference type="ChEBI" id="CHEBI:29033"/>
    </ligand>
</feature>
<comment type="function">
    <text evidence="1">Involved in coproporphyrin-dependent heme b biosynthesis. Catalyzes the insertion of ferrous iron into coproporphyrin III to form Fe-coproporphyrin III.</text>
</comment>
<comment type="catalytic activity">
    <reaction evidence="1">
        <text>Fe-coproporphyrin III + 2 H(+) = coproporphyrin III + Fe(2+)</text>
        <dbReference type="Rhea" id="RHEA:49572"/>
        <dbReference type="ChEBI" id="CHEBI:15378"/>
        <dbReference type="ChEBI" id="CHEBI:29033"/>
        <dbReference type="ChEBI" id="CHEBI:68438"/>
        <dbReference type="ChEBI" id="CHEBI:131725"/>
        <dbReference type="EC" id="4.99.1.9"/>
    </reaction>
    <physiologicalReaction direction="right-to-left" evidence="1">
        <dbReference type="Rhea" id="RHEA:49574"/>
    </physiologicalReaction>
</comment>
<comment type="pathway">
    <text evidence="1">Porphyrin-containing compound metabolism; protoheme biosynthesis.</text>
</comment>
<comment type="subcellular location">
    <subcellularLocation>
        <location evidence="1">Cytoplasm</location>
    </subcellularLocation>
</comment>
<comment type="similarity">
    <text evidence="1">Belongs to the ferrochelatase family.</text>
</comment>
<evidence type="ECO:0000255" key="1">
    <source>
        <dbReference type="HAMAP-Rule" id="MF_00323"/>
    </source>
</evidence>
<gene>
    <name evidence="1" type="primary">cpfC</name>
    <name type="ordered locus">NFA_34750</name>
</gene>
<dbReference type="EC" id="4.99.1.9" evidence="1"/>
<dbReference type="EMBL" id="AP006618">
    <property type="protein sequence ID" value="BAD58323.1"/>
    <property type="molecule type" value="Genomic_DNA"/>
</dbReference>
<dbReference type="RefSeq" id="WP_011210008.1">
    <property type="nucleotide sequence ID" value="NC_006361.1"/>
</dbReference>
<dbReference type="SMR" id="Q5YU18"/>
<dbReference type="STRING" id="247156.NFA_34750"/>
<dbReference type="GeneID" id="61134177"/>
<dbReference type="KEGG" id="nfa:NFA_34750"/>
<dbReference type="eggNOG" id="COG0276">
    <property type="taxonomic scope" value="Bacteria"/>
</dbReference>
<dbReference type="HOGENOM" id="CLU_018884_2_0_11"/>
<dbReference type="OrthoDB" id="9776380at2"/>
<dbReference type="UniPathway" id="UPA00252"/>
<dbReference type="Proteomes" id="UP000006820">
    <property type="component" value="Chromosome"/>
</dbReference>
<dbReference type="GO" id="GO:0005737">
    <property type="term" value="C:cytoplasm"/>
    <property type="evidence" value="ECO:0007669"/>
    <property type="project" value="UniProtKB-SubCell"/>
</dbReference>
<dbReference type="GO" id="GO:0004325">
    <property type="term" value="F:ferrochelatase activity"/>
    <property type="evidence" value="ECO:0007669"/>
    <property type="project" value="UniProtKB-UniRule"/>
</dbReference>
<dbReference type="GO" id="GO:0046872">
    <property type="term" value="F:metal ion binding"/>
    <property type="evidence" value="ECO:0007669"/>
    <property type="project" value="UniProtKB-KW"/>
</dbReference>
<dbReference type="GO" id="GO:0006783">
    <property type="term" value="P:heme biosynthetic process"/>
    <property type="evidence" value="ECO:0007669"/>
    <property type="project" value="UniProtKB-UniRule"/>
</dbReference>
<dbReference type="CDD" id="cd00419">
    <property type="entry name" value="Ferrochelatase_C"/>
    <property type="match status" value="1"/>
</dbReference>
<dbReference type="CDD" id="cd03411">
    <property type="entry name" value="Ferrochelatase_N"/>
    <property type="match status" value="1"/>
</dbReference>
<dbReference type="Gene3D" id="3.40.50.1400">
    <property type="match status" value="2"/>
</dbReference>
<dbReference type="HAMAP" id="MF_00323">
    <property type="entry name" value="Ferrochelatase"/>
    <property type="match status" value="1"/>
</dbReference>
<dbReference type="InterPro" id="IPR001015">
    <property type="entry name" value="Ferrochelatase"/>
</dbReference>
<dbReference type="InterPro" id="IPR019772">
    <property type="entry name" value="Ferrochelatase_AS"/>
</dbReference>
<dbReference type="InterPro" id="IPR033644">
    <property type="entry name" value="Ferrochelatase_C"/>
</dbReference>
<dbReference type="InterPro" id="IPR033659">
    <property type="entry name" value="Ferrochelatase_N"/>
</dbReference>
<dbReference type="NCBIfam" id="TIGR00109">
    <property type="entry name" value="hemH"/>
    <property type="match status" value="1"/>
</dbReference>
<dbReference type="NCBIfam" id="NF000689">
    <property type="entry name" value="PRK00035.2-1"/>
    <property type="match status" value="1"/>
</dbReference>
<dbReference type="PANTHER" id="PTHR11108">
    <property type="entry name" value="FERROCHELATASE"/>
    <property type="match status" value="1"/>
</dbReference>
<dbReference type="PANTHER" id="PTHR11108:SF1">
    <property type="entry name" value="FERROCHELATASE, MITOCHONDRIAL"/>
    <property type="match status" value="1"/>
</dbReference>
<dbReference type="Pfam" id="PF00762">
    <property type="entry name" value="Ferrochelatase"/>
    <property type="match status" value="1"/>
</dbReference>
<dbReference type="SUPFAM" id="SSF53800">
    <property type="entry name" value="Chelatase"/>
    <property type="match status" value="1"/>
</dbReference>
<dbReference type="PROSITE" id="PS00534">
    <property type="entry name" value="FERROCHELATASE"/>
    <property type="match status" value="1"/>
</dbReference>
<organism>
    <name type="scientific">Nocardia farcinica (strain IFM 10152)</name>
    <dbReference type="NCBI Taxonomy" id="247156"/>
    <lineage>
        <taxon>Bacteria</taxon>
        <taxon>Bacillati</taxon>
        <taxon>Actinomycetota</taxon>
        <taxon>Actinomycetes</taxon>
        <taxon>Mycobacteriales</taxon>
        <taxon>Nocardiaceae</taxon>
        <taxon>Nocardia</taxon>
    </lineage>
</organism>
<reference key="1">
    <citation type="journal article" date="2004" name="Proc. Natl. Acad. Sci. U.S.A.">
        <title>The complete genomic sequence of Nocardia farcinica IFM 10152.</title>
        <authorList>
            <person name="Ishikawa J."/>
            <person name="Yamashita A."/>
            <person name="Mikami Y."/>
            <person name="Hoshino Y."/>
            <person name="Kurita H."/>
            <person name="Hotta K."/>
            <person name="Shiba T."/>
            <person name="Hattori M."/>
        </authorList>
    </citation>
    <scope>NUCLEOTIDE SEQUENCE [LARGE SCALE GENOMIC DNA]</scope>
    <source>
        <strain>IFM 10152</strain>
    </source>
</reference>
<name>CPFC_NOCFA</name>
<proteinExistence type="inferred from homology"/>
<protein>
    <recommendedName>
        <fullName evidence="1">Coproporphyrin III ferrochelatase</fullName>
        <ecNumber evidence="1">4.99.1.9</ecNumber>
    </recommendedName>
</protein>
<sequence>MAVEALLLLSFGGPERPEDVMPFLENVTRGRGVPRARLEEVAQHYLHFGGVSPINALNRDIIAGVERELDEAGIDLPVYFGNRNWHPMVEDTVAEMARDGVTGALVFPTSAWGGYSGCRQYHEDIERARAAVGPAAPHLTKLRQYFDHPLLIEAFADAIRAALERLPADRRDRARLVFTAHSVPVAADAAAGPPADGGELYSRQVADAARLCAAATGFADHDLVWQSRSGPPQVPWLEPDIVDHLEDLAGRGVDAVVVCPVGFVSDHLEVIWDLDNEAKDKAAELGMAFARASTPGTDPRFPRLVVELMREHLDGLAPRRLGAEPGYGCTIDGMPCASGCCAPQRRPAAAGR</sequence>
<accession>Q5YU18</accession>